<sequence>MDYEFLRDITGVVKVRLSMGHEALGHWFNEEVKGNLALLDEVEAAARDVKGSERQWQKTGHEYTLWLDGEEVMVRANQLEFSGDEMEEGMSYYDEESLSLCGVEDFLQVVQAYRDFLAQYG</sequence>
<protein>
    <recommendedName>
        <fullName evidence="1">UPF0231 protein ESA_03214</fullName>
    </recommendedName>
</protein>
<organism>
    <name type="scientific">Cronobacter sakazakii (strain ATCC BAA-894)</name>
    <name type="common">Enterobacter sakazakii</name>
    <dbReference type="NCBI Taxonomy" id="290339"/>
    <lineage>
        <taxon>Bacteria</taxon>
        <taxon>Pseudomonadati</taxon>
        <taxon>Pseudomonadota</taxon>
        <taxon>Gammaproteobacteria</taxon>
        <taxon>Enterobacterales</taxon>
        <taxon>Enterobacteriaceae</taxon>
        <taxon>Cronobacter</taxon>
    </lineage>
</organism>
<name>Y3214_CROS8</name>
<keyword id="KW-1185">Reference proteome</keyword>
<dbReference type="EMBL" id="CP000783">
    <property type="protein sequence ID" value="ABU78436.1"/>
    <property type="molecule type" value="Genomic_DNA"/>
</dbReference>
<dbReference type="KEGG" id="esa:ESA_03214"/>
<dbReference type="HOGENOM" id="CLU_139226_0_0_6"/>
<dbReference type="Proteomes" id="UP000000260">
    <property type="component" value="Chromosome"/>
</dbReference>
<dbReference type="HAMAP" id="MF_01053">
    <property type="entry name" value="UPF0231"/>
    <property type="match status" value="1"/>
</dbReference>
<dbReference type="InterPro" id="IPR008249">
    <property type="entry name" value="UPF0231"/>
</dbReference>
<dbReference type="NCBIfam" id="NF003574">
    <property type="entry name" value="PRK05248.1-1"/>
    <property type="match status" value="1"/>
</dbReference>
<dbReference type="NCBIfam" id="NF003576">
    <property type="entry name" value="PRK05248.1-3"/>
    <property type="match status" value="1"/>
</dbReference>
<dbReference type="Pfam" id="PF06062">
    <property type="entry name" value="UPF0231"/>
    <property type="match status" value="1"/>
</dbReference>
<dbReference type="PIRSF" id="PIRSF006287">
    <property type="entry name" value="UCP006287"/>
    <property type="match status" value="1"/>
</dbReference>
<gene>
    <name type="ordered locus">ESA_03214</name>
</gene>
<reference key="1">
    <citation type="journal article" date="2010" name="PLoS ONE">
        <title>Genome sequence of Cronobacter sakazakii BAA-894 and comparative genomic hybridization analysis with other Cronobacter species.</title>
        <authorList>
            <person name="Kucerova E."/>
            <person name="Clifton S.W."/>
            <person name="Xia X.Q."/>
            <person name="Long F."/>
            <person name="Porwollik S."/>
            <person name="Fulton L."/>
            <person name="Fronick C."/>
            <person name="Minx P."/>
            <person name="Kyung K."/>
            <person name="Warren W."/>
            <person name="Fulton R."/>
            <person name="Feng D."/>
            <person name="Wollam A."/>
            <person name="Shah N."/>
            <person name="Bhonagiri V."/>
            <person name="Nash W.E."/>
            <person name="Hallsworth-Pepin K."/>
            <person name="Wilson R.K."/>
            <person name="McClelland M."/>
            <person name="Forsythe S.J."/>
        </authorList>
    </citation>
    <scope>NUCLEOTIDE SEQUENCE [LARGE SCALE GENOMIC DNA]</scope>
    <source>
        <strain>ATCC BAA-894</strain>
    </source>
</reference>
<accession>A7MGP3</accession>
<evidence type="ECO:0000255" key="1">
    <source>
        <dbReference type="HAMAP-Rule" id="MF_01053"/>
    </source>
</evidence>
<comment type="similarity">
    <text evidence="1">Belongs to the UPF0231 family.</text>
</comment>
<feature type="chain" id="PRO_1000064361" description="UPF0231 protein ESA_03214">
    <location>
        <begin position="1"/>
        <end position="121"/>
    </location>
</feature>
<proteinExistence type="inferred from homology"/>